<protein>
    <recommendedName>
        <fullName evidence="1">Small ribosomal subunit protein uS14</fullName>
    </recommendedName>
    <alternativeName>
        <fullName evidence="2">30S ribosomal protein S14 type Z</fullName>
    </alternativeName>
</protein>
<dbReference type="EMBL" id="AE000657">
    <property type="protein sequence ID" value="AAC07537.1"/>
    <property type="molecule type" value="Genomic_DNA"/>
</dbReference>
<dbReference type="PIR" id="F70442">
    <property type="entry name" value="F70442"/>
</dbReference>
<dbReference type="RefSeq" id="NP_214133.1">
    <property type="nucleotide sequence ID" value="NC_000918.1"/>
</dbReference>
<dbReference type="RefSeq" id="WP_010881070.1">
    <property type="nucleotide sequence ID" value="NC_000918.1"/>
</dbReference>
<dbReference type="SMR" id="P0A4B1"/>
<dbReference type="STRING" id="224324.aq_1651a"/>
<dbReference type="EnsemblBacteria" id="AAC07537">
    <property type="protein sequence ID" value="AAC07537"/>
    <property type="gene ID" value="aq_1651a"/>
</dbReference>
<dbReference type="KEGG" id="aae:aq_1651a"/>
<dbReference type="PATRIC" id="fig|224324.8.peg.1273"/>
<dbReference type="eggNOG" id="COG0199">
    <property type="taxonomic scope" value="Bacteria"/>
</dbReference>
<dbReference type="HOGENOM" id="CLU_139869_3_0_0"/>
<dbReference type="InParanoid" id="P0A4B1"/>
<dbReference type="OrthoDB" id="9810484at2"/>
<dbReference type="Proteomes" id="UP000000798">
    <property type="component" value="Chromosome"/>
</dbReference>
<dbReference type="GO" id="GO:0005737">
    <property type="term" value="C:cytoplasm"/>
    <property type="evidence" value="ECO:0007669"/>
    <property type="project" value="UniProtKB-ARBA"/>
</dbReference>
<dbReference type="GO" id="GO:1990904">
    <property type="term" value="C:ribonucleoprotein complex"/>
    <property type="evidence" value="ECO:0007669"/>
    <property type="project" value="UniProtKB-KW"/>
</dbReference>
<dbReference type="GO" id="GO:0005840">
    <property type="term" value="C:ribosome"/>
    <property type="evidence" value="ECO:0007669"/>
    <property type="project" value="UniProtKB-KW"/>
</dbReference>
<dbReference type="GO" id="GO:0019843">
    <property type="term" value="F:rRNA binding"/>
    <property type="evidence" value="ECO:0007669"/>
    <property type="project" value="UniProtKB-UniRule"/>
</dbReference>
<dbReference type="GO" id="GO:0003735">
    <property type="term" value="F:structural constituent of ribosome"/>
    <property type="evidence" value="ECO:0007669"/>
    <property type="project" value="InterPro"/>
</dbReference>
<dbReference type="GO" id="GO:0008270">
    <property type="term" value="F:zinc ion binding"/>
    <property type="evidence" value="ECO:0007669"/>
    <property type="project" value="UniProtKB-UniRule"/>
</dbReference>
<dbReference type="GO" id="GO:0006412">
    <property type="term" value="P:translation"/>
    <property type="evidence" value="ECO:0007669"/>
    <property type="project" value="UniProtKB-UniRule"/>
</dbReference>
<dbReference type="Gene3D" id="4.10.830.10">
    <property type="entry name" value="30s Ribosomal Protein S14, Chain N"/>
    <property type="match status" value="1"/>
</dbReference>
<dbReference type="HAMAP" id="MF_01364_B">
    <property type="entry name" value="Ribosomal_uS14_2_B"/>
    <property type="match status" value="1"/>
</dbReference>
<dbReference type="InterPro" id="IPR001209">
    <property type="entry name" value="Ribosomal_uS14"/>
</dbReference>
<dbReference type="InterPro" id="IPR023053">
    <property type="entry name" value="Ribosomal_uS14_bact"/>
</dbReference>
<dbReference type="InterPro" id="IPR018271">
    <property type="entry name" value="Ribosomal_uS14_CS"/>
</dbReference>
<dbReference type="InterPro" id="IPR043140">
    <property type="entry name" value="Ribosomal_uS14_sf"/>
</dbReference>
<dbReference type="NCBIfam" id="NF005974">
    <property type="entry name" value="PRK08061.1"/>
    <property type="match status" value="1"/>
</dbReference>
<dbReference type="PANTHER" id="PTHR19836">
    <property type="entry name" value="30S RIBOSOMAL PROTEIN S14"/>
    <property type="match status" value="1"/>
</dbReference>
<dbReference type="PANTHER" id="PTHR19836:SF19">
    <property type="entry name" value="SMALL RIBOSOMAL SUBUNIT PROTEIN US14M"/>
    <property type="match status" value="1"/>
</dbReference>
<dbReference type="Pfam" id="PF00253">
    <property type="entry name" value="Ribosomal_S14"/>
    <property type="match status" value="1"/>
</dbReference>
<dbReference type="SUPFAM" id="SSF57716">
    <property type="entry name" value="Glucocorticoid receptor-like (DNA-binding domain)"/>
    <property type="match status" value="1"/>
</dbReference>
<dbReference type="PROSITE" id="PS00527">
    <property type="entry name" value="RIBOSOMAL_S14"/>
    <property type="match status" value="1"/>
</dbReference>
<organism>
    <name type="scientific">Aquifex aeolicus (strain VF5)</name>
    <dbReference type="NCBI Taxonomy" id="224324"/>
    <lineage>
        <taxon>Bacteria</taxon>
        <taxon>Pseudomonadati</taxon>
        <taxon>Aquificota</taxon>
        <taxon>Aquificia</taxon>
        <taxon>Aquificales</taxon>
        <taxon>Aquificaceae</taxon>
        <taxon>Aquifex</taxon>
    </lineage>
</organism>
<proteinExistence type="inferred from homology"/>
<keyword id="KW-0479">Metal-binding</keyword>
<keyword id="KW-1185">Reference proteome</keyword>
<keyword id="KW-0687">Ribonucleoprotein</keyword>
<keyword id="KW-0689">Ribosomal protein</keyword>
<keyword id="KW-0694">RNA-binding</keyword>
<keyword id="KW-0699">rRNA-binding</keyword>
<keyword id="KW-0862">Zinc</keyword>
<accession>P0A4B1</accession>
<accession>O67567</accession>
<gene>
    <name evidence="1" type="primary">rpsZ</name>
    <name evidence="1" type="synonym">rps14</name>
    <name evidence="1" type="synonym">rpsN</name>
    <name type="ordered locus">aq_1651.1</name>
    <name type="ORF">aq_1651A</name>
</gene>
<name>RS14Z_AQUAE</name>
<evidence type="ECO:0000255" key="1">
    <source>
        <dbReference type="HAMAP-Rule" id="MF_01364"/>
    </source>
</evidence>
<evidence type="ECO:0000305" key="2"/>
<comment type="function">
    <text evidence="1">Binds 16S rRNA, required for the assembly of 30S particles and may also be responsible for determining the conformation of the 16S rRNA at the A site.</text>
</comment>
<comment type="cofactor">
    <cofactor evidence="1">
        <name>Zn(2+)</name>
        <dbReference type="ChEBI" id="CHEBI:29105"/>
    </cofactor>
    <text evidence="1">Binds 1 zinc ion per subunit.</text>
</comment>
<comment type="subunit">
    <text evidence="1">Part of the 30S ribosomal subunit. Contacts proteins S3 and S10.</text>
</comment>
<comment type="similarity">
    <text evidence="1">Belongs to the universal ribosomal protein uS14 family. Zinc-binding uS14 subfamily.</text>
</comment>
<reference key="1">
    <citation type="journal article" date="1998" name="Nature">
        <title>The complete genome of the hyperthermophilic bacterium Aquifex aeolicus.</title>
        <authorList>
            <person name="Deckert G."/>
            <person name="Warren P.V."/>
            <person name="Gaasterland T."/>
            <person name="Young W.G."/>
            <person name="Lenox A.L."/>
            <person name="Graham D.E."/>
            <person name="Overbeek R."/>
            <person name="Snead M.A."/>
            <person name="Keller M."/>
            <person name="Aujay M."/>
            <person name="Huber R."/>
            <person name="Feldman R.A."/>
            <person name="Short J.M."/>
            <person name="Olsen G.J."/>
            <person name="Swanson R.V."/>
        </authorList>
    </citation>
    <scope>NUCLEOTIDE SEQUENCE [LARGE SCALE GENOMIC DNA]</scope>
    <source>
        <strain>VF5</strain>
    </source>
</reference>
<sequence>MPRKAKVAKDLMYYPKWKSRKKNRCPICGRPRAFIRYFNMCRICFREHALRGDLPGVRKASW</sequence>
<feature type="chain" id="PRO_0000130868" description="Small ribosomal subunit protein uS14">
    <location>
        <begin position="1"/>
        <end position="62"/>
    </location>
</feature>
<feature type="binding site" evidence="1">
    <location>
        <position position="25"/>
    </location>
    <ligand>
        <name>Zn(2+)</name>
        <dbReference type="ChEBI" id="CHEBI:29105"/>
    </ligand>
</feature>
<feature type="binding site" evidence="1">
    <location>
        <position position="28"/>
    </location>
    <ligand>
        <name>Zn(2+)</name>
        <dbReference type="ChEBI" id="CHEBI:29105"/>
    </ligand>
</feature>
<feature type="binding site" evidence="1">
    <location>
        <position position="41"/>
    </location>
    <ligand>
        <name>Zn(2+)</name>
        <dbReference type="ChEBI" id="CHEBI:29105"/>
    </ligand>
</feature>
<feature type="binding site" evidence="1">
    <location>
        <position position="44"/>
    </location>
    <ligand>
        <name>Zn(2+)</name>
        <dbReference type="ChEBI" id="CHEBI:29105"/>
    </ligand>
</feature>